<organism>
    <name type="scientific">Streptococcus pyogenes serotype M12 (strain MGAS9429)</name>
    <dbReference type="NCBI Taxonomy" id="370551"/>
    <lineage>
        <taxon>Bacteria</taxon>
        <taxon>Bacillati</taxon>
        <taxon>Bacillota</taxon>
        <taxon>Bacilli</taxon>
        <taxon>Lactobacillales</taxon>
        <taxon>Streptococcaceae</taxon>
        <taxon>Streptococcus</taxon>
    </lineage>
</organism>
<name>LUXS_STRPC</name>
<protein>
    <recommendedName>
        <fullName evidence="1">S-ribosylhomocysteine lyase</fullName>
        <ecNumber evidence="1">4.4.1.21</ecNumber>
    </recommendedName>
    <alternativeName>
        <fullName evidence="1">AI-2 synthesis protein</fullName>
    </alternativeName>
    <alternativeName>
        <fullName evidence="1">Autoinducer-2 production protein LuxS</fullName>
    </alternativeName>
</protein>
<proteinExistence type="inferred from homology"/>
<reference key="1">
    <citation type="journal article" date="2006" name="Proc. Natl. Acad. Sci. U.S.A.">
        <title>Molecular genetic anatomy of inter- and intraserotype variation in the human bacterial pathogen group A Streptococcus.</title>
        <authorList>
            <person name="Beres S.B."/>
            <person name="Richter E.W."/>
            <person name="Nagiec M.J."/>
            <person name="Sumby P."/>
            <person name="Porcella S.F."/>
            <person name="DeLeo F.R."/>
            <person name="Musser J.M."/>
        </authorList>
    </citation>
    <scope>NUCLEOTIDE SEQUENCE [LARGE SCALE GENOMIC DNA]</scope>
    <source>
        <strain>MGAS9429</strain>
    </source>
</reference>
<dbReference type="EC" id="4.4.1.21" evidence="1"/>
<dbReference type="EMBL" id="CP000259">
    <property type="protein sequence ID" value="ABF32532.1"/>
    <property type="status" value="ALT_INIT"/>
    <property type="molecule type" value="Genomic_DNA"/>
</dbReference>
<dbReference type="RefSeq" id="WP_002988938.1">
    <property type="nucleotide sequence ID" value="NC_008021.1"/>
</dbReference>
<dbReference type="SMR" id="Q1JKN7"/>
<dbReference type="KEGG" id="spk:MGAS9429_Spy1345"/>
<dbReference type="HOGENOM" id="CLU_107531_2_1_9"/>
<dbReference type="Proteomes" id="UP000002433">
    <property type="component" value="Chromosome"/>
</dbReference>
<dbReference type="GO" id="GO:0005506">
    <property type="term" value="F:iron ion binding"/>
    <property type="evidence" value="ECO:0007669"/>
    <property type="project" value="InterPro"/>
</dbReference>
<dbReference type="GO" id="GO:0043768">
    <property type="term" value="F:S-ribosylhomocysteine lyase activity"/>
    <property type="evidence" value="ECO:0007669"/>
    <property type="project" value="UniProtKB-UniRule"/>
</dbReference>
<dbReference type="GO" id="GO:0009372">
    <property type="term" value="P:quorum sensing"/>
    <property type="evidence" value="ECO:0007669"/>
    <property type="project" value="UniProtKB-UniRule"/>
</dbReference>
<dbReference type="Gene3D" id="3.30.1360.80">
    <property type="entry name" value="S-ribosylhomocysteinase (LuxS)"/>
    <property type="match status" value="1"/>
</dbReference>
<dbReference type="HAMAP" id="MF_00091">
    <property type="entry name" value="LuxS"/>
    <property type="match status" value="1"/>
</dbReference>
<dbReference type="InterPro" id="IPR037005">
    <property type="entry name" value="LuxS_sf"/>
</dbReference>
<dbReference type="InterPro" id="IPR011249">
    <property type="entry name" value="Metalloenz_LuxS/M16"/>
</dbReference>
<dbReference type="InterPro" id="IPR003815">
    <property type="entry name" value="S-ribosylhomocysteinase"/>
</dbReference>
<dbReference type="NCBIfam" id="NF002607">
    <property type="entry name" value="PRK02260.2-5"/>
    <property type="match status" value="1"/>
</dbReference>
<dbReference type="NCBIfam" id="NF002608">
    <property type="entry name" value="PRK02260.3-1"/>
    <property type="match status" value="1"/>
</dbReference>
<dbReference type="PANTHER" id="PTHR35799">
    <property type="entry name" value="S-RIBOSYLHOMOCYSTEINE LYASE"/>
    <property type="match status" value="1"/>
</dbReference>
<dbReference type="PANTHER" id="PTHR35799:SF1">
    <property type="entry name" value="S-RIBOSYLHOMOCYSTEINE LYASE"/>
    <property type="match status" value="1"/>
</dbReference>
<dbReference type="Pfam" id="PF02664">
    <property type="entry name" value="LuxS"/>
    <property type="match status" value="1"/>
</dbReference>
<dbReference type="PIRSF" id="PIRSF006160">
    <property type="entry name" value="AI2"/>
    <property type="match status" value="1"/>
</dbReference>
<dbReference type="PRINTS" id="PR01487">
    <property type="entry name" value="LUXSPROTEIN"/>
</dbReference>
<dbReference type="SUPFAM" id="SSF63411">
    <property type="entry name" value="LuxS/MPP-like metallohydrolase"/>
    <property type="match status" value="1"/>
</dbReference>
<gene>
    <name evidence="1" type="primary">luxS</name>
    <name type="ordered locus">MGAS9429_Spy1345</name>
</gene>
<sequence length="160" mass="17979">MTKEVIVESFELDHTIVKAPYVRLISEEFGPKGDRITNFDVRLVQPNQNSIETAGLHTIEHLLAKLIRQRIDGMIDCSPFGCRTGFHLIMWGKHSSTDIAKVIKSSLEEIATGITWEDVPGTTLESCGNYKDHSLFAAKEWAQLIIDQGISDDPFSRHVI</sequence>
<feature type="chain" id="PRO_0000298043" description="S-ribosylhomocysteine lyase">
    <location>
        <begin position="1"/>
        <end position="160"/>
    </location>
</feature>
<feature type="binding site" evidence="1">
    <location>
        <position position="57"/>
    </location>
    <ligand>
        <name>Fe cation</name>
        <dbReference type="ChEBI" id="CHEBI:24875"/>
    </ligand>
</feature>
<feature type="binding site" evidence="1">
    <location>
        <position position="61"/>
    </location>
    <ligand>
        <name>Fe cation</name>
        <dbReference type="ChEBI" id="CHEBI:24875"/>
    </ligand>
</feature>
<feature type="binding site" evidence="1">
    <location>
        <position position="127"/>
    </location>
    <ligand>
        <name>Fe cation</name>
        <dbReference type="ChEBI" id="CHEBI:24875"/>
    </ligand>
</feature>
<keyword id="KW-0071">Autoinducer synthesis</keyword>
<keyword id="KW-0408">Iron</keyword>
<keyword id="KW-0456">Lyase</keyword>
<keyword id="KW-0479">Metal-binding</keyword>
<keyword id="KW-0673">Quorum sensing</keyword>
<accession>Q1JKN7</accession>
<comment type="function">
    <text evidence="1">Involved in the synthesis of autoinducer 2 (AI-2) which is secreted by bacteria and is used to communicate both the cell density and the metabolic potential of the environment. The regulation of gene expression in response to changes in cell density is called quorum sensing. Catalyzes the transformation of S-ribosylhomocysteine (RHC) to homocysteine (HC) and 4,5-dihydroxy-2,3-pentadione (DPD).</text>
</comment>
<comment type="catalytic activity">
    <reaction evidence="1">
        <text>S-(5-deoxy-D-ribos-5-yl)-L-homocysteine = (S)-4,5-dihydroxypentane-2,3-dione + L-homocysteine</text>
        <dbReference type="Rhea" id="RHEA:17753"/>
        <dbReference type="ChEBI" id="CHEBI:29484"/>
        <dbReference type="ChEBI" id="CHEBI:58195"/>
        <dbReference type="ChEBI" id="CHEBI:58199"/>
        <dbReference type="EC" id="4.4.1.21"/>
    </reaction>
</comment>
<comment type="cofactor">
    <cofactor evidence="1">
        <name>Fe cation</name>
        <dbReference type="ChEBI" id="CHEBI:24875"/>
    </cofactor>
    <text evidence="1">Binds 1 Fe cation per subunit.</text>
</comment>
<comment type="subunit">
    <text evidence="1">Homodimer.</text>
</comment>
<comment type="similarity">
    <text evidence="1">Belongs to the LuxS family.</text>
</comment>
<comment type="sequence caution" evidence="2">
    <conflict type="erroneous initiation">
        <sequence resource="EMBL-CDS" id="ABF32532"/>
    </conflict>
</comment>
<evidence type="ECO:0000255" key="1">
    <source>
        <dbReference type="HAMAP-Rule" id="MF_00091"/>
    </source>
</evidence>
<evidence type="ECO:0000305" key="2"/>